<proteinExistence type="inferred from homology"/>
<accession>Q2GGC5</accession>
<evidence type="ECO:0000255" key="1">
    <source>
        <dbReference type="HAMAP-Rule" id="MF_00120"/>
    </source>
</evidence>
<keyword id="KW-0067">ATP-binding</keyword>
<keyword id="KW-0436">Ligase</keyword>
<keyword id="KW-0547">Nucleotide-binding</keyword>
<keyword id="KW-0648">Protein biosynthesis</keyword>
<keyword id="KW-1185">Reference proteome</keyword>
<sequence length="487" mass="53160">MKNILKLSIAEMHDNLKKREFSAVELTKLHIEAVNNEKLNAFITKTPEIALSAAEKADYIFTHQKENLTPLTGIPVGIKDLFCTKHVRTTACSNILKNFTPQYDSTVTKRLLDNGAVMLGKLNMDEFAMGSSNSNSCFGHVKNPWVRADGVEVVPGGSSGGSSAAVAGFLCAGALGSDTGGSVRQPAALCGIVGLKPTYGRCSRFGMIAFASSLDQAGVLTRTVEDASLMLQSICGYDIQDSTSANIAVPKFSESITHTIKGKRIGIPKEYELSGKYQEYTEVSEMWAKGIQYLKDEGAEIIEISLPHTSYALPVYYIICSAEASSNLARYDGIRYGARISSDDINEMYELTRGHNFGTEVKRRILIGAYVLSSGYYDAYYNKAQRIRHLVINDFVESFKKIDYILTPTTPKEAFAINEQLDTLTMYLNDVFTVPASLAGLPAISVPIGLSKSNLPLSLQVIGNYYDEGGILNVASIIEKHTGKILK</sequence>
<reference key="1">
    <citation type="journal article" date="2006" name="PLoS Genet.">
        <title>Comparative genomics of emerging human ehrlichiosis agents.</title>
        <authorList>
            <person name="Dunning Hotopp J.C."/>
            <person name="Lin M."/>
            <person name="Madupu R."/>
            <person name="Crabtree J."/>
            <person name="Angiuoli S.V."/>
            <person name="Eisen J.A."/>
            <person name="Seshadri R."/>
            <person name="Ren Q."/>
            <person name="Wu M."/>
            <person name="Utterback T.R."/>
            <person name="Smith S."/>
            <person name="Lewis M."/>
            <person name="Khouri H."/>
            <person name="Zhang C."/>
            <person name="Niu H."/>
            <person name="Lin Q."/>
            <person name="Ohashi N."/>
            <person name="Zhi N."/>
            <person name="Nelson W.C."/>
            <person name="Brinkac L.M."/>
            <person name="Dodson R.J."/>
            <person name="Rosovitz M.J."/>
            <person name="Sundaram J.P."/>
            <person name="Daugherty S.C."/>
            <person name="Davidsen T."/>
            <person name="Durkin A.S."/>
            <person name="Gwinn M.L."/>
            <person name="Haft D.H."/>
            <person name="Selengut J.D."/>
            <person name="Sullivan S.A."/>
            <person name="Zafar N."/>
            <person name="Zhou L."/>
            <person name="Benahmed F."/>
            <person name="Forberger H."/>
            <person name="Halpin R."/>
            <person name="Mulligan S."/>
            <person name="Robinson J."/>
            <person name="White O."/>
            <person name="Rikihisa Y."/>
            <person name="Tettelin H."/>
        </authorList>
    </citation>
    <scope>NUCLEOTIDE SEQUENCE [LARGE SCALE GENOMIC DNA]</scope>
    <source>
        <strain>ATCC CRL-10679 / Arkansas</strain>
    </source>
</reference>
<comment type="function">
    <text evidence="1">Allows the formation of correctly charged Gln-tRNA(Gln) through the transamidation of misacylated Glu-tRNA(Gln) in organisms which lack glutaminyl-tRNA synthetase. The reaction takes place in the presence of glutamine and ATP through an activated gamma-phospho-Glu-tRNA(Gln).</text>
</comment>
<comment type="catalytic activity">
    <reaction evidence="1">
        <text>L-glutamyl-tRNA(Gln) + L-glutamine + ATP + H2O = L-glutaminyl-tRNA(Gln) + L-glutamate + ADP + phosphate + H(+)</text>
        <dbReference type="Rhea" id="RHEA:17521"/>
        <dbReference type="Rhea" id="RHEA-COMP:9681"/>
        <dbReference type="Rhea" id="RHEA-COMP:9684"/>
        <dbReference type="ChEBI" id="CHEBI:15377"/>
        <dbReference type="ChEBI" id="CHEBI:15378"/>
        <dbReference type="ChEBI" id="CHEBI:29985"/>
        <dbReference type="ChEBI" id="CHEBI:30616"/>
        <dbReference type="ChEBI" id="CHEBI:43474"/>
        <dbReference type="ChEBI" id="CHEBI:58359"/>
        <dbReference type="ChEBI" id="CHEBI:78520"/>
        <dbReference type="ChEBI" id="CHEBI:78521"/>
        <dbReference type="ChEBI" id="CHEBI:456216"/>
        <dbReference type="EC" id="6.3.5.7"/>
    </reaction>
</comment>
<comment type="subunit">
    <text evidence="1">Heterotrimer of A, B and C subunits.</text>
</comment>
<comment type="similarity">
    <text evidence="1">Belongs to the amidase family. GatA subfamily.</text>
</comment>
<dbReference type="EC" id="6.3.5.7" evidence="1"/>
<dbReference type="EMBL" id="CP000236">
    <property type="protein sequence ID" value="ABD44527.1"/>
    <property type="molecule type" value="Genomic_DNA"/>
</dbReference>
<dbReference type="RefSeq" id="WP_006009841.1">
    <property type="nucleotide sequence ID" value="NC_007799.1"/>
</dbReference>
<dbReference type="SMR" id="Q2GGC5"/>
<dbReference type="STRING" id="205920.ECH_0703"/>
<dbReference type="KEGG" id="ech:ECH_0703"/>
<dbReference type="eggNOG" id="COG0154">
    <property type="taxonomic scope" value="Bacteria"/>
</dbReference>
<dbReference type="HOGENOM" id="CLU_009600_0_3_5"/>
<dbReference type="OrthoDB" id="9811471at2"/>
<dbReference type="Proteomes" id="UP000008320">
    <property type="component" value="Chromosome"/>
</dbReference>
<dbReference type="GO" id="GO:0030956">
    <property type="term" value="C:glutamyl-tRNA(Gln) amidotransferase complex"/>
    <property type="evidence" value="ECO:0007669"/>
    <property type="project" value="InterPro"/>
</dbReference>
<dbReference type="GO" id="GO:0005524">
    <property type="term" value="F:ATP binding"/>
    <property type="evidence" value="ECO:0007669"/>
    <property type="project" value="UniProtKB-KW"/>
</dbReference>
<dbReference type="GO" id="GO:0050567">
    <property type="term" value="F:glutaminyl-tRNA synthase (glutamine-hydrolyzing) activity"/>
    <property type="evidence" value="ECO:0007669"/>
    <property type="project" value="UniProtKB-UniRule"/>
</dbReference>
<dbReference type="GO" id="GO:0006412">
    <property type="term" value="P:translation"/>
    <property type="evidence" value="ECO:0007669"/>
    <property type="project" value="UniProtKB-UniRule"/>
</dbReference>
<dbReference type="Gene3D" id="3.90.1300.10">
    <property type="entry name" value="Amidase signature (AS) domain"/>
    <property type="match status" value="1"/>
</dbReference>
<dbReference type="HAMAP" id="MF_00120">
    <property type="entry name" value="GatA"/>
    <property type="match status" value="1"/>
</dbReference>
<dbReference type="InterPro" id="IPR000120">
    <property type="entry name" value="Amidase"/>
</dbReference>
<dbReference type="InterPro" id="IPR020556">
    <property type="entry name" value="Amidase_CS"/>
</dbReference>
<dbReference type="InterPro" id="IPR023631">
    <property type="entry name" value="Amidase_dom"/>
</dbReference>
<dbReference type="InterPro" id="IPR036928">
    <property type="entry name" value="AS_sf"/>
</dbReference>
<dbReference type="InterPro" id="IPR004412">
    <property type="entry name" value="GatA"/>
</dbReference>
<dbReference type="NCBIfam" id="TIGR00132">
    <property type="entry name" value="gatA"/>
    <property type="match status" value="1"/>
</dbReference>
<dbReference type="PANTHER" id="PTHR11895:SF151">
    <property type="entry name" value="GLUTAMYL-TRNA(GLN) AMIDOTRANSFERASE SUBUNIT A"/>
    <property type="match status" value="1"/>
</dbReference>
<dbReference type="PANTHER" id="PTHR11895">
    <property type="entry name" value="TRANSAMIDASE"/>
    <property type="match status" value="1"/>
</dbReference>
<dbReference type="Pfam" id="PF01425">
    <property type="entry name" value="Amidase"/>
    <property type="match status" value="1"/>
</dbReference>
<dbReference type="SUPFAM" id="SSF75304">
    <property type="entry name" value="Amidase signature (AS) enzymes"/>
    <property type="match status" value="1"/>
</dbReference>
<dbReference type="PROSITE" id="PS00571">
    <property type="entry name" value="AMIDASES"/>
    <property type="match status" value="1"/>
</dbReference>
<gene>
    <name evidence="1" type="primary">gatA</name>
    <name type="ordered locus">ECH_0703</name>
</gene>
<protein>
    <recommendedName>
        <fullName evidence="1">Glutamyl-tRNA(Gln) amidotransferase subunit A</fullName>
        <shortName evidence="1">Glu-ADT subunit A</shortName>
        <ecNumber evidence="1">6.3.5.7</ecNumber>
    </recommendedName>
</protein>
<name>GATA_EHRCR</name>
<feature type="chain" id="PRO_0000241099" description="Glutamyl-tRNA(Gln) amidotransferase subunit A">
    <location>
        <begin position="1"/>
        <end position="487"/>
    </location>
</feature>
<feature type="active site" description="Charge relay system" evidence="1">
    <location>
        <position position="79"/>
    </location>
</feature>
<feature type="active site" description="Charge relay system" evidence="1">
    <location>
        <position position="158"/>
    </location>
</feature>
<feature type="active site" description="Acyl-ester intermediate" evidence="1">
    <location>
        <position position="182"/>
    </location>
</feature>
<organism>
    <name type="scientific">Ehrlichia chaffeensis (strain ATCC CRL-10679 / Arkansas)</name>
    <dbReference type="NCBI Taxonomy" id="205920"/>
    <lineage>
        <taxon>Bacteria</taxon>
        <taxon>Pseudomonadati</taxon>
        <taxon>Pseudomonadota</taxon>
        <taxon>Alphaproteobacteria</taxon>
        <taxon>Rickettsiales</taxon>
        <taxon>Anaplasmataceae</taxon>
        <taxon>Ehrlichia</taxon>
    </lineage>
</organism>